<evidence type="ECO:0000255" key="1">
    <source>
        <dbReference type="HAMAP-Rule" id="MF_00022"/>
    </source>
</evidence>
<proteinExistence type="inferred from homology"/>
<reference key="1">
    <citation type="journal article" date="2010" name="PLoS ONE">
        <title>The complete genome sequence of Cupriavidus metallidurans strain CH34, a master survivalist in harsh and anthropogenic environments.</title>
        <authorList>
            <person name="Janssen P.J."/>
            <person name="Van Houdt R."/>
            <person name="Moors H."/>
            <person name="Monsieurs P."/>
            <person name="Morin N."/>
            <person name="Michaux A."/>
            <person name="Benotmane M.A."/>
            <person name="Leys N."/>
            <person name="Vallaeys T."/>
            <person name="Lapidus A."/>
            <person name="Monchy S."/>
            <person name="Medigue C."/>
            <person name="Taghavi S."/>
            <person name="McCorkle S."/>
            <person name="Dunn J."/>
            <person name="van der Lelie D."/>
            <person name="Mergeay M."/>
        </authorList>
    </citation>
    <scope>NUCLEOTIDE SEQUENCE [LARGE SCALE GENOMIC DNA]</scope>
    <source>
        <strain>ATCC 43123 / DSM 2839 / NBRC 102507 / CH34</strain>
    </source>
</reference>
<name>SYE_CUPMC</name>
<accession>Q1LLF7</accession>
<sequence length="465" mass="52295">MTQRVRTRFAPSPTGFIHLGNIRSAFYPWAFARRMKGDFILRIEDTDVERSTDVAVDVILESMAWLDLDIDEGPFYQMQRMDRYREVVQQMLDNELAYHCYMSTEELDALREAQRAAGEKPRYNGFWRPEPGKVLPEPPAGVQPVVRFKNPIGGSVVWDDAVKGRIEISNDELDDLVIARPDGTPTYNFCVVVDDLDMKITHVIRGDDHVNNTPRQINIIRALGGEVPVYAHLPTVLNEQGEKMSKRHGALPVTGYRDEGYLPEAVLNYLARLGWAHGDAEIFSREQFVEWFDLEHLGKSPAQYNPEKLAWLNNHYIKVGDNTRLADLTRPFIEALGGKVEGANLVDVIALVKDRANTLKEVAQTAMLFYRGEPQADAALKAEHLTDEIRPALQALATQLAALPEWKREAISAAFKAVLAEFGLKMPKLAMPVRLLVAGQLQTPSIDAVLELFGRDTVLRRLAAA</sequence>
<organism>
    <name type="scientific">Cupriavidus metallidurans (strain ATCC 43123 / DSM 2839 / NBRC 102507 / CH34)</name>
    <name type="common">Ralstonia metallidurans</name>
    <dbReference type="NCBI Taxonomy" id="266264"/>
    <lineage>
        <taxon>Bacteria</taxon>
        <taxon>Pseudomonadati</taxon>
        <taxon>Pseudomonadota</taxon>
        <taxon>Betaproteobacteria</taxon>
        <taxon>Burkholderiales</taxon>
        <taxon>Burkholderiaceae</taxon>
        <taxon>Cupriavidus</taxon>
    </lineage>
</organism>
<comment type="function">
    <text evidence="1">Catalyzes the attachment of glutamate to tRNA(Glu) in a two-step reaction: glutamate is first activated by ATP to form Glu-AMP and then transferred to the acceptor end of tRNA(Glu).</text>
</comment>
<comment type="catalytic activity">
    <reaction evidence="1">
        <text>tRNA(Glu) + L-glutamate + ATP = L-glutamyl-tRNA(Glu) + AMP + diphosphate</text>
        <dbReference type="Rhea" id="RHEA:23540"/>
        <dbReference type="Rhea" id="RHEA-COMP:9663"/>
        <dbReference type="Rhea" id="RHEA-COMP:9680"/>
        <dbReference type="ChEBI" id="CHEBI:29985"/>
        <dbReference type="ChEBI" id="CHEBI:30616"/>
        <dbReference type="ChEBI" id="CHEBI:33019"/>
        <dbReference type="ChEBI" id="CHEBI:78442"/>
        <dbReference type="ChEBI" id="CHEBI:78520"/>
        <dbReference type="ChEBI" id="CHEBI:456215"/>
        <dbReference type="EC" id="6.1.1.17"/>
    </reaction>
</comment>
<comment type="subunit">
    <text evidence="1">Monomer.</text>
</comment>
<comment type="subcellular location">
    <subcellularLocation>
        <location evidence="1">Cytoplasm</location>
    </subcellularLocation>
</comment>
<comment type="similarity">
    <text evidence="1">Belongs to the class-I aminoacyl-tRNA synthetase family. Glutamate--tRNA ligase type 1 subfamily.</text>
</comment>
<feature type="chain" id="PRO_1000001946" description="Glutamate--tRNA ligase">
    <location>
        <begin position="1"/>
        <end position="465"/>
    </location>
</feature>
<feature type="short sequence motif" description="'HIGH' region" evidence="1">
    <location>
        <begin position="11"/>
        <end position="21"/>
    </location>
</feature>
<feature type="short sequence motif" description="'KMSKS' region" evidence="1">
    <location>
        <begin position="243"/>
        <end position="247"/>
    </location>
</feature>
<feature type="binding site" evidence="1">
    <location>
        <position position="246"/>
    </location>
    <ligand>
        <name>ATP</name>
        <dbReference type="ChEBI" id="CHEBI:30616"/>
    </ligand>
</feature>
<keyword id="KW-0030">Aminoacyl-tRNA synthetase</keyword>
<keyword id="KW-0067">ATP-binding</keyword>
<keyword id="KW-0963">Cytoplasm</keyword>
<keyword id="KW-0436">Ligase</keyword>
<keyword id="KW-0547">Nucleotide-binding</keyword>
<keyword id="KW-0648">Protein biosynthesis</keyword>
<keyword id="KW-1185">Reference proteome</keyword>
<protein>
    <recommendedName>
        <fullName evidence="1">Glutamate--tRNA ligase</fullName>
        <ecNumber evidence="1">6.1.1.17</ecNumber>
    </recommendedName>
    <alternativeName>
        <fullName evidence="1">Glutamyl-tRNA synthetase</fullName>
        <shortName evidence="1">GluRS</shortName>
    </alternativeName>
</protein>
<dbReference type="EC" id="6.1.1.17" evidence="1"/>
<dbReference type="EMBL" id="CP000352">
    <property type="protein sequence ID" value="ABF09019.1"/>
    <property type="molecule type" value="Genomic_DNA"/>
</dbReference>
<dbReference type="RefSeq" id="WP_011516848.1">
    <property type="nucleotide sequence ID" value="NC_007973.1"/>
</dbReference>
<dbReference type="SMR" id="Q1LLF7"/>
<dbReference type="STRING" id="266264.Rmet_2140"/>
<dbReference type="KEGG" id="rme:Rmet_2140"/>
<dbReference type="eggNOG" id="COG0008">
    <property type="taxonomic scope" value="Bacteria"/>
</dbReference>
<dbReference type="HOGENOM" id="CLU_015768_6_0_4"/>
<dbReference type="Proteomes" id="UP000002429">
    <property type="component" value="Chromosome"/>
</dbReference>
<dbReference type="GO" id="GO:0005829">
    <property type="term" value="C:cytosol"/>
    <property type="evidence" value="ECO:0007669"/>
    <property type="project" value="TreeGrafter"/>
</dbReference>
<dbReference type="GO" id="GO:0005524">
    <property type="term" value="F:ATP binding"/>
    <property type="evidence" value="ECO:0007669"/>
    <property type="project" value="UniProtKB-UniRule"/>
</dbReference>
<dbReference type="GO" id="GO:0004818">
    <property type="term" value="F:glutamate-tRNA ligase activity"/>
    <property type="evidence" value="ECO:0007669"/>
    <property type="project" value="UniProtKB-UniRule"/>
</dbReference>
<dbReference type="GO" id="GO:0000049">
    <property type="term" value="F:tRNA binding"/>
    <property type="evidence" value="ECO:0007669"/>
    <property type="project" value="InterPro"/>
</dbReference>
<dbReference type="GO" id="GO:0008270">
    <property type="term" value="F:zinc ion binding"/>
    <property type="evidence" value="ECO:0007669"/>
    <property type="project" value="InterPro"/>
</dbReference>
<dbReference type="GO" id="GO:0006424">
    <property type="term" value="P:glutamyl-tRNA aminoacylation"/>
    <property type="evidence" value="ECO:0007669"/>
    <property type="project" value="UniProtKB-UniRule"/>
</dbReference>
<dbReference type="CDD" id="cd00808">
    <property type="entry name" value="GluRS_core"/>
    <property type="match status" value="1"/>
</dbReference>
<dbReference type="FunFam" id="3.40.50.620:FF:000007">
    <property type="entry name" value="Glutamate--tRNA ligase"/>
    <property type="match status" value="1"/>
</dbReference>
<dbReference type="Gene3D" id="1.10.10.350">
    <property type="match status" value="1"/>
</dbReference>
<dbReference type="Gene3D" id="3.40.50.620">
    <property type="entry name" value="HUPs"/>
    <property type="match status" value="1"/>
</dbReference>
<dbReference type="HAMAP" id="MF_00022">
    <property type="entry name" value="Glu_tRNA_synth_type1"/>
    <property type="match status" value="1"/>
</dbReference>
<dbReference type="InterPro" id="IPR045462">
    <property type="entry name" value="aa-tRNA-synth_I_cd-bd"/>
</dbReference>
<dbReference type="InterPro" id="IPR020751">
    <property type="entry name" value="aa-tRNA-synth_I_codon-bd_sub2"/>
</dbReference>
<dbReference type="InterPro" id="IPR001412">
    <property type="entry name" value="aa-tRNA-synth_I_CS"/>
</dbReference>
<dbReference type="InterPro" id="IPR008925">
    <property type="entry name" value="aa_tRNA-synth_I_cd-bd_sf"/>
</dbReference>
<dbReference type="InterPro" id="IPR004527">
    <property type="entry name" value="Glu-tRNA-ligase_bac/mito"/>
</dbReference>
<dbReference type="InterPro" id="IPR000924">
    <property type="entry name" value="Glu/Gln-tRNA-synth"/>
</dbReference>
<dbReference type="InterPro" id="IPR020058">
    <property type="entry name" value="Glu/Gln-tRNA-synth_Ib_cat-dom"/>
</dbReference>
<dbReference type="InterPro" id="IPR049940">
    <property type="entry name" value="GluQ/Sye"/>
</dbReference>
<dbReference type="InterPro" id="IPR033910">
    <property type="entry name" value="GluRS_core"/>
</dbReference>
<dbReference type="InterPro" id="IPR014729">
    <property type="entry name" value="Rossmann-like_a/b/a_fold"/>
</dbReference>
<dbReference type="NCBIfam" id="TIGR00464">
    <property type="entry name" value="gltX_bact"/>
    <property type="match status" value="1"/>
</dbReference>
<dbReference type="PANTHER" id="PTHR43311">
    <property type="entry name" value="GLUTAMATE--TRNA LIGASE"/>
    <property type="match status" value="1"/>
</dbReference>
<dbReference type="PANTHER" id="PTHR43311:SF2">
    <property type="entry name" value="GLUTAMATE--TRNA LIGASE, MITOCHONDRIAL-RELATED"/>
    <property type="match status" value="1"/>
</dbReference>
<dbReference type="Pfam" id="PF19269">
    <property type="entry name" value="Anticodon_2"/>
    <property type="match status" value="1"/>
</dbReference>
<dbReference type="Pfam" id="PF00749">
    <property type="entry name" value="tRNA-synt_1c"/>
    <property type="match status" value="1"/>
</dbReference>
<dbReference type="PRINTS" id="PR00987">
    <property type="entry name" value="TRNASYNTHGLU"/>
</dbReference>
<dbReference type="SUPFAM" id="SSF48163">
    <property type="entry name" value="An anticodon-binding domain of class I aminoacyl-tRNA synthetases"/>
    <property type="match status" value="1"/>
</dbReference>
<dbReference type="SUPFAM" id="SSF52374">
    <property type="entry name" value="Nucleotidylyl transferase"/>
    <property type="match status" value="1"/>
</dbReference>
<dbReference type="PROSITE" id="PS00178">
    <property type="entry name" value="AA_TRNA_LIGASE_I"/>
    <property type="match status" value="1"/>
</dbReference>
<gene>
    <name evidence="1" type="primary">gltX</name>
    <name type="ordered locus">Rmet_2140</name>
</gene>